<organism>
    <name type="scientific">Helicobacter pylori (strain G27)</name>
    <dbReference type="NCBI Taxonomy" id="563041"/>
    <lineage>
        <taxon>Bacteria</taxon>
        <taxon>Pseudomonadati</taxon>
        <taxon>Campylobacterota</taxon>
        <taxon>Epsilonproteobacteria</taxon>
        <taxon>Campylobacterales</taxon>
        <taxon>Helicobacteraceae</taxon>
        <taxon>Helicobacter</taxon>
    </lineage>
</organism>
<accession>B5ZA05</accession>
<protein>
    <recommendedName>
        <fullName evidence="1">Proline--tRNA ligase</fullName>
        <ecNumber evidence="1">6.1.1.15</ecNumber>
    </recommendedName>
    <alternativeName>
        <fullName evidence="1">Prolyl-tRNA synthetase</fullName>
        <shortName evidence="1">ProRS</shortName>
    </alternativeName>
</protein>
<reference key="1">
    <citation type="journal article" date="2009" name="J. Bacteriol.">
        <title>The complete genome sequence of Helicobacter pylori strain G27.</title>
        <authorList>
            <person name="Baltrus D.A."/>
            <person name="Amieva M.R."/>
            <person name="Covacci A."/>
            <person name="Lowe T.M."/>
            <person name="Merrell D.S."/>
            <person name="Ottemann K.M."/>
            <person name="Stein M."/>
            <person name="Salama N.R."/>
            <person name="Guillemin K."/>
        </authorList>
    </citation>
    <scope>NUCLEOTIDE SEQUENCE [LARGE SCALE GENOMIC DNA]</scope>
    <source>
        <strain>G27</strain>
    </source>
</reference>
<name>SYP_HELPG</name>
<gene>
    <name evidence="1" type="primary">proS</name>
    <name type="ordered locus">HPG27_218</name>
</gene>
<keyword id="KW-0030">Aminoacyl-tRNA synthetase</keyword>
<keyword id="KW-0067">ATP-binding</keyword>
<keyword id="KW-0963">Cytoplasm</keyword>
<keyword id="KW-0436">Ligase</keyword>
<keyword id="KW-0547">Nucleotide-binding</keyword>
<keyword id="KW-0648">Protein biosynthesis</keyword>
<keyword id="KW-1185">Reference proteome</keyword>
<evidence type="ECO:0000255" key="1">
    <source>
        <dbReference type="HAMAP-Rule" id="MF_01569"/>
    </source>
</evidence>
<sequence length="577" mass="65101">MLFSKLFAPTLKEPPKDAVLKSHKHLAQAGYIYQVGSGIYNFLPLAKKVLDKIENITHKRMQEHGAQNILMSFVVLASLWEKSGRLDKYGKELLVFKDRKDNDFVLSPTLEENITEIAANFIKSYKQLPVHLYQIHTKFRDEIRPRFGLVRAREFIMKDGYSFHEDAESLDKEFLNTQSAYKEILSDLGLDFRIVEADSGAIGGSKSREFVVLTECGEDTIVVCQNCDYAANIEIAKRSKRPEPLNVPKAQLAKFPTPNTTSAQSVAEFFKTEPYFVLKALVKKVIHKDKETLACFFVRGDDNLEETKALNALNIIGANALELREANEEDLNHAGLIAGFIGPYGLKKHVSYIIFDEDLKEGDCLIAGANEKDFHAVGVDLKGFENLVYADIVQIKESDHCPNCQGALKYHKSLEVGHIFKLGQGYAKSLKASFLDKNGKEQFFEMGCYGIGISRLLSAILEQKSDDLGCVWTKNTAPFDVVIVVSNWKDEAQKKLAFEVYERLLQKGVDALLDDRDARFGAKMRDFELIGERLALIVGKQALESKEFECIKRANLEKQTLKDTELEEKILEMLASE</sequence>
<dbReference type="EC" id="6.1.1.15" evidence="1"/>
<dbReference type="EMBL" id="CP001173">
    <property type="protein sequence ID" value="ACI26985.1"/>
    <property type="molecule type" value="Genomic_DNA"/>
</dbReference>
<dbReference type="RefSeq" id="WP_000899247.1">
    <property type="nucleotide sequence ID" value="NC_011333.1"/>
</dbReference>
<dbReference type="SMR" id="B5ZA05"/>
<dbReference type="KEGG" id="hpg:HPG27_218"/>
<dbReference type="HOGENOM" id="CLU_016739_0_0_7"/>
<dbReference type="Proteomes" id="UP000001735">
    <property type="component" value="Chromosome"/>
</dbReference>
<dbReference type="GO" id="GO:0005829">
    <property type="term" value="C:cytosol"/>
    <property type="evidence" value="ECO:0007669"/>
    <property type="project" value="TreeGrafter"/>
</dbReference>
<dbReference type="GO" id="GO:0002161">
    <property type="term" value="F:aminoacyl-tRNA deacylase activity"/>
    <property type="evidence" value="ECO:0007669"/>
    <property type="project" value="InterPro"/>
</dbReference>
<dbReference type="GO" id="GO:0005524">
    <property type="term" value="F:ATP binding"/>
    <property type="evidence" value="ECO:0007669"/>
    <property type="project" value="UniProtKB-UniRule"/>
</dbReference>
<dbReference type="GO" id="GO:0004827">
    <property type="term" value="F:proline-tRNA ligase activity"/>
    <property type="evidence" value="ECO:0007669"/>
    <property type="project" value="UniProtKB-UniRule"/>
</dbReference>
<dbReference type="GO" id="GO:0006433">
    <property type="term" value="P:prolyl-tRNA aminoacylation"/>
    <property type="evidence" value="ECO:0007669"/>
    <property type="project" value="UniProtKB-UniRule"/>
</dbReference>
<dbReference type="CDD" id="cd04334">
    <property type="entry name" value="ProRS-INS"/>
    <property type="match status" value="1"/>
</dbReference>
<dbReference type="CDD" id="cd00861">
    <property type="entry name" value="ProRS_anticodon_short"/>
    <property type="match status" value="1"/>
</dbReference>
<dbReference type="CDD" id="cd00779">
    <property type="entry name" value="ProRS_core_prok"/>
    <property type="match status" value="1"/>
</dbReference>
<dbReference type="FunFam" id="3.30.930.10:FF:000065">
    <property type="entry name" value="Proline--tRNA ligase"/>
    <property type="match status" value="1"/>
</dbReference>
<dbReference type="FunFam" id="3.30.930.10:FF:000066">
    <property type="entry name" value="Proline--tRNA ligase"/>
    <property type="match status" value="1"/>
</dbReference>
<dbReference type="FunFam" id="3.40.50.800:FF:000051">
    <property type="entry name" value="Proline--tRNA ligase"/>
    <property type="match status" value="1"/>
</dbReference>
<dbReference type="Gene3D" id="3.40.50.800">
    <property type="entry name" value="Anticodon-binding domain"/>
    <property type="match status" value="1"/>
</dbReference>
<dbReference type="Gene3D" id="3.30.930.10">
    <property type="entry name" value="Bira Bifunctional Protein, Domain 2"/>
    <property type="match status" value="2"/>
</dbReference>
<dbReference type="HAMAP" id="MF_01569">
    <property type="entry name" value="Pro_tRNA_synth_type1"/>
    <property type="match status" value="1"/>
</dbReference>
<dbReference type="InterPro" id="IPR002314">
    <property type="entry name" value="aa-tRNA-synt_IIb"/>
</dbReference>
<dbReference type="InterPro" id="IPR006195">
    <property type="entry name" value="aa-tRNA-synth_II"/>
</dbReference>
<dbReference type="InterPro" id="IPR045864">
    <property type="entry name" value="aa-tRNA-synth_II/BPL/LPL"/>
</dbReference>
<dbReference type="InterPro" id="IPR004154">
    <property type="entry name" value="Anticodon-bd"/>
</dbReference>
<dbReference type="InterPro" id="IPR036621">
    <property type="entry name" value="Anticodon-bd_dom_sf"/>
</dbReference>
<dbReference type="InterPro" id="IPR002316">
    <property type="entry name" value="Pro-tRNA-ligase_IIa"/>
</dbReference>
<dbReference type="InterPro" id="IPR004500">
    <property type="entry name" value="Pro-tRNA-synth_IIa_bac-type"/>
</dbReference>
<dbReference type="InterPro" id="IPR023717">
    <property type="entry name" value="Pro-tRNA-Synthase_IIa_type1"/>
</dbReference>
<dbReference type="InterPro" id="IPR050062">
    <property type="entry name" value="Pro-tRNA_synthetase"/>
</dbReference>
<dbReference type="InterPro" id="IPR044140">
    <property type="entry name" value="ProRS_anticodon_short"/>
</dbReference>
<dbReference type="InterPro" id="IPR033730">
    <property type="entry name" value="ProRS_core_prok"/>
</dbReference>
<dbReference type="InterPro" id="IPR036754">
    <property type="entry name" value="YbaK/aa-tRNA-synt-asso_dom_sf"/>
</dbReference>
<dbReference type="InterPro" id="IPR007214">
    <property type="entry name" value="YbaK/aa-tRNA-synth-assoc-dom"/>
</dbReference>
<dbReference type="NCBIfam" id="NF006625">
    <property type="entry name" value="PRK09194.1"/>
    <property type="match status" value="1"/>
</dbReference>
<dbReference type="NCBIfam" id="TIGR00409">
    <property type="entry name" value="proS_fam_II"/>
    <property type="match status" value="1"/>
</dbReference>
<dbReference type="PANTHER" id="PTHR42753">
    <property type="entry name" value="MITOCHONDRIAL RIBOSOME PROTEIN L39/PROLYL-TRNA LIGASE FAMILY MEMBER"/>
    <property type="match status" value="1"/>
</dbReference>
<dbReference type="PANTHER" id="PTHR42753:SF2">
    <property type="entry name" value="PROLINE--TRNA LIGASE"/>
    <property type="match status" value="1"/>
</dbReference>
<dbReference type="Pfam" id="PF03129">
    <property type="entry name" value="HGTP_anticodon"/>
    <property type="match status" value="1"/>
</dbReference>
<dbReference type="Pfam" id="PF00587">
    <property type="entry name" value="tRNA-synt_2b"/>
    <property type="match status" value="2"/>
</dbReference>
<dbReference type="Pfam" id="PF04073">
    <property type="entry name" value="tRNA_edit"/>
    <property type="match status" value="1"/>
</dbReference>
<dbReference type="PRINTS" id="PR01046">
    <property type="entry name" value="TRNASYNTHPRO"/>
</dbReference>
<dbReference type="SUPFAM" id="SSF52954">
    <property type="entry name" value="Class II aaRS ABD-related"/>
    <property type="match status" value="1"/>
</dbReference>
<dbReference type="SUPFAM" id="SSF55681">
    <property type="entry name" value="Class II aaRS and biotin synthetases"/>
    <property type="match status" value="1"/>
</dbReference>
<dbReference type="SUPFAM" id="SSF55826">
    <property type="entry name" value="YbaK/ProRS associated domain"/>
    <property type="match status" value="1"/>
</dbReference>
<dbReference type="PROSITE" id="PS50862">
    <property type="entry name" value="AA_TRNA_LIGASE_II"/>
    <property type="match status" value="1"/>
</dbReference>
<comment type="function">
    <text evidence="1">Catalyzes the attachment of proline to tRNA(Pro) in a two-step reaction: proline is first activated by ATP to form Pro-AMP and then transferred to the acceptor end of tRNA(Pro). As ProRS can inadvertently accommodate and process non-cognate amino acids such as alanine and cysteine, to avoid such errors it has two additional distinct editing activities against alanine. One activity is designated as 'pretransfer' editing and involves the tRNA(Pro)-independent hydrolysis of activated Ala-AMP. The other activity is designated 'posttransfer' editing and involves deacylation of mischarged Ala-tRNA(Pro). The misacylated Cys-tRNA(Pro) is not edited by ProRS.</text>
</comment>
<comment type="catalytic activity">
    <reaction evidence="1">
        <text>tRNA(Pro) + L-proline + ATP = L-prolyl-tRNA(Pro) + AMP + diphosphate</text>
        <dbReference type="Rhea" id="RHEA:14305"/>
        <dbReference type="Rhea" id="RHEA-COMP:9700"/>
        <dbReference type="Rhea" id="RHEA-COMP:9702"/>
        <dbReference type="ChEBI" id="CHEBI:30616"/>
        <dbReference type="ChEBI" id="CHEBI:33019"/>
        <dbReference type="ChEBI" id="CHEBI:60039"/>
        <dbReference type="ChEBI" id="CHEBI:78442"/>
        <dbReference type="ChEBI" id="CHEBI:78532"/>
        <dbReference type="ChEBI" id="CHEBI:456215"/>
        <dbReference type="EC" id="6.1.1.15"/>
    </reaction>
</comment>
<comment type="subunit">
    <text evidence="1">Homodimer.</text>
</comment>
<comment type="subcellular location">
    <subcellularLocation>
        <location evidence="1">Cytoplasm</location>
    </subcellularLocation>
</comment>
<comment type="domain">
    <text evidence="1">Consists of three domains: the N-terminal catalytic domain, the editing domain and the C-terminal anticodon-binding domain.</text>
</comment>
<comment type="similarity">
    <text evidence="1">Belongs to the class-II aminoacyl-tRNA synthetase family. ProS type 1 subfamily.</text>
</comment>
<proteinExistence type="inferred from homology"/>
<feature type="chain" id="PRO_1000199391" description="Proline--tRNA ligase">
    <location>
        <begin position="1"/>
        <end position="577"/>
    </location>
</feature>